<proteinExistence type="inferred from homology"/>
<dbReference type="EMBL" id="AL513382">
    <property type="protein sequence ID" value="CAD05731.1"/>
    <property type="status" value="ALT_INIT"/>
    <property type="molecule type" value="Genomic_DNA"/>
</dbReference>
<dbReference type="EMBL" id="AE014613">
    <property type="protein sequence ID" value="AAO68572.1"/>
    <property type="status" value="ALT_INIT"/>
    <property type="molecule type" value="Genomic_DNA"/>
</dbReference>
<dbReference type="RefSeq" id="NP_456544.1">
    <property type="nucleotide sequence ID" value="NC_003198.1"/>
</dbReference>
<dbReference type="RefSeq" id="WP_000867218.1">
    <property type="nucleotide sequence ID" value="NZ_WSUR01000004.1"/>
</dbReference>
<dbReference type="SMR" id="Q8Z5R1"/>
<dbReference type="KEGG" id="stt:t0894"/>
<dbReference type="KEGG" id="sty:STY2191"/>
<dbReference type="PATRIC" id="fig|220341.7.peg.2206"/>
<dbReference type="eggNOG" id="ENOG5032ZW5">
    <property type="taxonomic scope" value="Bacteria"/>
</dbReference>
<dbReference type="HOGENOM" id="CLU_189289_0_0_6"/>
<dbReference type="OMA" id="IWFFNEL"/>
<dbReference type="Proteomes" id="UP000000541">
    <property type="component" value="Chromosome"/>
</dbReference>
<dbReference type="Proteomes" id="UP000002670">
    <property type="component" value="Chromosome"/>
</dbReference>
<dbReference type="HAMAP" id="MF_01549">
    <property type="entry name" value="DsrB"/>
    <property type="match status" value="1"/>
</dbReference>
<dbReference type="InterPro" id="IPR019717">
    <property type="entry name" value="Dextransucrase_DSRB"/>
</dbReference>
<dbReference type="NCBIfam" id="NF007981">
    <property type="entry name" value="PRK10708.1"/>
    <property type="match status" value="1"/>
</dbReference>
<dbReference type="Pfam" id="PF10781">
    <property type="entry name" value="DSRB"/>
    <property type="match status" value="1"/>
</dbReference>
<protein>
    <recommendedName>
        <fullName evidence="1">Protein DsrB</fullName>
    </recommendedName>
</protein>
<gene>
    <name evidence="1" type="primary">dsrB</name>
    <name type="ordered locus">STY2191</name>
    <name type="ordered locus">t0894</name>
</gene>
<evidence type="ECO:0000255" key="1">
    <source>
        <dbReference type="HAMAP-Rule" id="MF_01549"/>
    </source>
</evidence>
<evidence type="ECO:0000305" key="2"/>
<sequence length="64" mass="7205">MKVNDRVTVKTDGGPRRPGVVLAVEEFSEGTMYLVSLEDYPLGIWFFNESGHQDGIFVEKAEQD</sequence>
<organism>
    <name type="scientific">Salmonella typhi</name>
    <dbReference type="NCBI Taxonomy" id="90370"/>
    <lineage>
        <taxon>Bacteria</taxon>
        <taxon>Pseudomonadati</taxon>
        <taxon>Pseudomonadota</taxon>
        <taxon>Gammaproteobacteria</taxon>
        <taxon>Enterobacterales</taxon>
        <taxon>Enterobacteriaceae</taxon>
        <taxon>Salmonella</taxon>
    </lineage>
</organism>
<accession>Q8Z5R1</accession>
<accession>Q7CAQ2</accession>
<name>DSRB_SALTI</name>
<reference key="1">
    <citation type="journal article" date="2001" name="Nature">
        <title>Complete genome sequence of a multiple drug resistant Salmonella enterica serovar Typhi CT18.</title>
        <authorList>
            <person name="Parkhill J."/>
            <person name="Dougan G."/>
            <person name="James K.D."/>
            <person name="Thomson N.R."/>
            <person name="Pickard D."/>
            <person name="Wain J."/>
            <person name="Churcher C.M."/>
            <person name="Mungall K.L."/>
            <person name="Bentley S.D."/>
            <person name="Holden M.T.G."/>
            <person name="Sebaihia M."/>
            <person name="Baker S."/>
            <person name="Basham D."/>
            <person name="Brooks K."/>
            <person name="Chillingworth T."/>
            <person name="Connerton P."/>
            <person name="Cronin A."/>
            <person name="Davis P."/>
            <person name="Davies R.M."/>
            <person name="Dowd L."/>
            <person name="White N."/>
            <person name="Farrar J."/>
            <person name="Feltwell T."/>
            <person name="Hamlin N."/>
            <person name="Haque A."/>
            <person name="Hien T.T."/>
            <person name="Holroyd S."/>
            <person name="Jagels K."/>
            <person name="Krogh A."/>
            <person name="Larsen T.S."/>
            <person name="Leather S."/>
            <person name="Moule S."/>
            <person name="O'Gaora P."/>
            <person name="Parry C."/>
            <person name="Quail M.A."/>
            <person name="Rutherford K.M."/>
            <person name="Simmonds M."/>
            <person name="Skelton J."/>
            <person name="Stevens K."/>
            <person name="Whitehead S."/>
            <person name="Barrell B.G."/>
        </authorList>
    </citation>
    <scope>NUCLEOTIDE SEQUENCE [LARGE SCALE GENOMIC DNA]</scope>
    <source>
        <strain>CT18</strain>
    </source>
</reference>
<reference key="2">
    <citation type="journal article" date="2003" name="J. Bacteriol.">
        <title>Comparative genomics of Salmonella enterica serovar Typhi strains Ty2 and CT18.</title>
        <authorList>
            <person name="Deng W."/>
            <person name="Liou S.-R."/>
            <person name="Plunkett G. III"/>
            <person name="Mayhew G.F."/>
            <person name="Rose D.J."/>
            <person name="Burland V."/>
            <person name="Kodoyianni V."/>
            <person name="Schwartz D.C."/>
            <person name="Blattner F.R."/>
        </authorList>
    </citation>
    <scope>NUCLEOTIDE SEQUENCE [LARGE SCALE GENOMIC DNA]</scope>
    <source>
        <strain>ATCC 700931 / Ty2</strain>
    </source>
</reference>
<feature type="chain" id="PRO_0000201912" description="Protein DsrB">
    <location>
        <begin position="1"/>
        <end position="64"/>
    </location>
</feature>
<comment type="similarity">
    <text evidence="1">Belongs to the DsrB family.</text>
</comment>
<comment type="sequence caution" evidence="2">
    <conflict type="erroneous initiation">
        <sequence resource="EMBL-CDS" id="AAO68572"/>
    </conflict>
</comment>
<comment type="sequence caution" evidence="2">
    <conflict type="erroneous initiation">
        <sequence resource="EMBL-CDS" id="CAD05731"/>
    </conflict>
</comment>